<protein>
    <recommendedName>
        <fullName>D-tagatose-1,6-bisphosphate aldolase subunit KbaZ</fullName>
    </recommendedName>
</protein>
<comment type="function">
    <text evidence="1 2">Component of the tagatose-1,6-bisphosphate aldolase KbaYZ that is required for full activity and stability of the Y subunit. Could have a chaperone-like function for the proper and stable folding of KbaY. When expressed alone, KbaZ does not show any aldolase activity. Is involved in the catabolism of N-acetylgalactosamine and D-galactosamine.</text>
</comment>
<comment type="pathway">
    <text>Carbohydrate metabolism; D-tagatose 6-phosphate degradation; D-glyceraldehyde 3-phosphate and glycerone phosphate from D-tagatose 6-phosphate: step 2/2.</text>
</comment>
<comment type="subunit">
    <text>Forms a complex with KbaY.</text>
</comment>
<comment type="similarity">
    <text evidence="3">Belongs to the GatZ/KbaZ family. KbaZ subfamily.</text>
</comment>
<sequence>MKHLTEMVRQHKAGKTNGIYAVCSAHPLVLEAAIRYASANQTPLLIEATSNQVDQFGGYTGMTPADFRGFVCQLADSLNFPQDALILGGDHLGPNRWQNLPAAQAMANADDLIKSYVAAGFKKIHLDCSMSCQDDPIPLTDDIVAERAARLAKVAEETCLEHFGEADLEYVIGTEVPVPGGAHETLSELAVTTPDAARATLEAHRHAFEKQGLNAIWPRIIALVVQPGVEFDHTNVIDYQPAKASALSQMVENYETLIFEAHSTDYQTPQSLRQLVIDHFAILKVGPALTFALREALFSLAAIEEELVPAKACSGLRQVLEDVMLDRPEYWQSHYHGDGNARRLARGYSYSDRVRYYWPDSQIDDAFAHLVRNLADSPIPLPLISQYLPLQYVKVRSGELQPTPRELIINHIQDILAQYHTACEGQ</sequence>
<dbReference type="EMBL" id="AF228498">
    <property type="protein sequence ID" value="AAF81082.1"/>
    <property type="molecule type" value="Genomic_DNA"/>
</dbReference>
<dbReference type="RefSeq" id="WP_000681920.1">
    <property type="nucleotide sequence ID" value="NZ_WVVZ01000010.1"/>
</dbReference>
<dbReference type="SMR" id="P0C8K1"/>
<dbReference type="STRING" id="585034.ECIAI1_3280"/>
<dbReference type="eggNOG" id="COG4573">
    <property type="taxonomic scope" value="Bacteria"/>
</dbReference>
<dbReference type="OMA" id="QRHFSYS"/>
<dbReference type="UniPathway" id="UPA00704">
    <property type="reaction ID" value="UER00716"/>
</dbReference>
<dbReference type="GO" id="GO:0005886">
    <property type="term" value="C:plasma membrane"/>
    <property type="evidence" value="ECO:0007669"/>
    <property type="project" value="TreeGrafter"/>
</dbReference>
<dbReference type="GO" id="GO:0005975">
    <property type="term" value="P:carbohydrate metabolic process"/>
    <property type="evidence" value="ECO:0007669"/>
    <property type="project" value="InterPro"/>
</dbReference>
<dbReference type="GO" id="GO:2001059">
    <property type="term" value="P:D-tagatose 6-phosphate catabolic process"/>
    <property type="evidence" value="ECO:0007669"/>
    <property type="project" value="UniProtKB-UniRule"/>
</dbReference>
<dbReference type="GO" id="GO:0009401">
    <property type="term" value="P:phosphoenolpyruvate-dependent sugar phosphotransferase system"/>
    <property type="evidence" value="ECO:0007669"/>
    <property type="project" value="TreeGrafter"/>
</dbReference>
<dbReference type="Gene3D" id="3.20.20.70">
    <property type="entry name" value="Aldolase class I"/>
    <property type="match status" value="1"/>
</dbReference>
<dbReference type="Gene3D" id="1.10.400.20">
    <property type="entry name" value="putative tagatose 6-phosphate kinase domain like"/>
    <property type="match status" value="1"/>
</dbReference>
<dbReference type="HAMAP" id="MF_01295">
    <property type="entry name" value="Tagatose_aldol_KbaZ"/>
    <property type="match status" value="1"/>
</dbReference>
<dbReference type="InterPro" id="IPR013785">
    <property type="entry name" value="Aldolase_TIM"/>
</dbReference>
<dbReference type="InterPro" id="IPR012062">
    <property type="entry name" value="GatZ/KbaZ-like"/>
</dbReference>
<dbReference type="InterPro" id="IPR050303">
    <property type="entry name" value="GatZ_KbaZ_carbometab"/>
</dbReference>
<dbReference type="InterPro" id="IPR023435">
    <property type="entry name" value="TagBP_ald_KbaZ"/>
</dbReference>
<dbReference type="NCBIfam" id="TIGR02810">
    <property type="entry name" value="agaZ_gatZ"/>
    <property type="match status" value="1"/>
</dbReference>
<dbReference type="NCBIfam" id="NF012002">
    <property type="entry name" value="PRK15458.1"/>
    <property type="match status" value="1"/>
</dbReference>
<dbReference type="PANTHER" id="PTHR32502:SF2">
    <property type="entry name" value="D-TAGATOSE-1,6-BISPHOSPHATE ALDOLASE SUBUNIT KBAZ"/>
    <property type="match status" value="1"/>
</dbReference>
<dbReference type="PANTHER" id="PTHR32502">
    <property type="entry name" value="N-ACETYLGALACTOSAMINE PERMEASE II COMPONENT-RELATED"/>
    <property type="match status" value="1"/>
</dbReference>
<dbReference type="Pfam" id="PF08013">
    <property type="entry name" value="GatZ_KbaZ-like"/>
    <property type="match status" value="1"/>
</dbReference>
<dbReference type="PIRSF" id="PIRSF009264">
    <property type="entry name" value="TagBP_ald_AgaZ"/>
    <property type="match status" value="1"/>
</dbReference>
<dbReference type="SUPFAM" id="SSF51569">
    <property type="entry name" value="Aldolase"/>
    <property type="match status" value="1"/>
</dbReference>
<name>KBAZ_ECOLX</name>
<proteinExistence type="evidence at protein level"/>
<reference key="1">
    <citation type="journal article" date="2000" name="Mol. Microbiol.">
        <title>Pathways for the utilization of N-acetyl-galactosamine and galactosamine in Escherichia coli.</title>
        <authorList>
            <person name="Brinkkoetter A."/>
            <person name="Kloess H."/>
            <person name="Alpert C.-A."/>
            <person name="Lengeler J.W."/>
        </authorList>
    </citation>
    <scope>NUCLEOTIDE SEQUENCE [GENOMIC DNA]</scope>
    <scope>FUNCTION IN THE CATABOLISM OF N-ACETYLGALACTOSAMINE AND D-GALACTOSAMINE</scope>
    <source>
        <strain>C</strain>
    </source>
</reference>
<reference key="2">
    <citation type="journal article" date="2002" name="Arch. Microbiol.">
        <title>Two class II D-tagatose-bisphosphate aldolases from enteric bacteria.</title>
        <authorList>
            <person name="Brinkkoetter A."/>
            <person name="Shakeri-Garakani A."/>
            <person name="Lengeler J.W."/>
        </authorList>
    </citation>
    <scope>FUNCTION AS A TAGBP ALDOLASE COMPONENT</scope>
    <scope>COMPLEX WITH KBAY</scope>
    <source>
        <strain>C</strain>
    </source>
</reference>
<evidence type="ECO:0000269" key="1">
    <source>
    </source>
</evidence>
<evidence type="ECO:0000269" key="2">
    <source>
    </source>
</evidence>
<evidence type="ECO:0000305" key="3"/>
<gene>
    <name type="primary">kbaZ</name>
    <name type="synonym">agaZ</name>
</gene>
<feature type="chain" id="PRO_0000355361" description="D-tagatose-1,6-bisphosphate aldolase subunit KbaZ">
    <location>
        <begin position="1"/>
        <end position="426"/>
    </location>
</feature>
<accession>P0C8K1</accession>
<accession>P42903</accession>
<accession>Q2M977</accession>
<organism>
    <name type="scientific">Escherichia coli</name>
    <dbReference type="NCBI Taxonomy" id="562"/>
    <lineage>
        <taxon>Bacteria</taxon>
        <taxon>Pseudomonadati</taxon>
        <taxon>Pseudomonadota</taxon>
        <taxon>Gammaproteobacteria</taxon>
        <taxon>Enterobacterales</taxon>
        <taxon>Enterobacteriaceae</taxon>
        <taxon>Escherichia</taxon>
    </lineage>
</organism>